<protein>
    <recommendedName>
        <fullName evidence="1">Sec-independent protein translocase protein TatA</fullName>
    </recommendedName>
</protein>
<name>TATA_XYLFM</name>
<accession>B0U458</accession>
<sequence length="71" mass="7672">MGSFSLLHWLVVLVIVLLVFGTKRLANGAKDIGSAIKEFKKSLHEDDKPTDQLGSTSQSTASGPQQDHGKH</sequence>
<comment type="function">
    <text evidence="1">Part of the twin-arginine translocation (Tat) system that transports large folded proteins containing a characteristic twin-arginine motif in their signal peptide across membranes. TatA could form the protein-conducting channel of the Tat system.</text>
</comment>
<comment type="subunit">
    <text evidence="1">The Tat system comprises two distinct complexes: a TatABC complex, containing multiple copies of TatA, TatB and TatC subunits, and a separate TatA complex, containing only TatA subunits. Substrates initially bind to the TatABC complex, which probably triggers association of the separate TatA complex to form the active translocon.</text>
</comment>
<comment type="subcellular location">
    <subcellularLocation>
        <location evidence="1">Cell inner membrane</location>
        <topology evidence="1">Single-pass membrane protein</topology>
    </subcellularLocation>
</comment>
<comment type="similarity">
    <text evidence="1">Belongs to the TatA/E family.</text>
</comment>
<organism>
    <name type="scientific">Xylella fastidiosa (strain M12)</name>
    <dbReference type="NCBI Taxonomy" id="405440"/>
    <lineage>
        <taxon>Bacteria</taxon>
        <taxon>Pseudomonadati</taxon>
        <taxon>Pseudomonadota</taxon>
        <taxon>Gammaproteobacteria</taxon>
        <taxon>Lysobacterales</taxon>
        <taxon>Lysobacteraceae</taxon>
        <taxon>Xylella</taxon>
    </lineage>
</organism>
<proteinExistence type="inferred from homology"/>
<gene>
    <name evidence="1" type="primary">tatA</name>
    <name type="ordered locus">Xfasm12_1738</name>
</gene>
<evidence type="ECO:0000255" key="1">
    <source>
        <dbReference type="HAMAP-Rule" id="MF_00236"/>
    </source>
</evidence>
<evidence type="ECO:0000256" key="2">
    <source>
        <dbReference type="SAM" id="MobiDB-lite"/>
    </source>
</evidence>
<dbReference type="EMBL" id="CP000941">
    <property type="protein sequence ID" value="ACA12637.1"/>
    <property type="molecule type" value="Genomic_DNA"/>
</dbReference>
<dbReference type="RefSeq" id="WP_004083544.1">
    <property type="nucleotide sequence ID" value="NC_010513.1"/>
</dbReference>
<dbReference type="SMR" id="B0U458"/>
<dbReference type="GeneID" id="93905405"/>
<dbReference type="KEGG" id="xfm:Xfasm12_1738"/>
<dbReference type="HOGENOM" id="CLU_086034_5_3_6"/>
<dbReference type="GO" id="GO:0033281">
    <property type="term" value="C:TAT protein transport complex"/>
    <property type="evidence" value="ECO:0007669"/>
    <property type="project" value="UniProtKB-UniRule"/>
</dbReference>
<dbReference type="GO" id="GO:0008320">
    <property type="term" value="F:protein transmembrane transporter activity"/>
    <property type="evidence" value="ECO:0007669"/>
    <property type="project" value="UniProtKB-UniRule"/>
</dbReference>
<dbReference type="GO" id="GO:0043953">
    <property type="term" value="P:protein transport by the Tat complex"/>
    <property type="evidence" value="ECO:0007669"/>
    <property type="project" value="UniProtKB-UniRule"/>
</dbReference>
<dbReference type="Gene3D" id="1.20.5.3310">
    <property type="match status" value="1"/>
</dbReference>
<dbReference type="HAMAP" id="MF_00236">
    <property type="entry name" value="TatA_E"/>
    <property type="match status" value="1"/>
</dbReference>
<dbReference type="InterPro" id="IPR003369">
    <property type="entry name" value="TatA/B/E"/>
</dbReference>
<dbReference type="InterPro" id="IPR006312">
    <property type="entry name" value="TatA/E"/>
</dbReference>
<dbReference type="NCBIfam" id="NF003393">
    <property type="entry name" value="PRK04561.1"/>
    <property type="match status" value="1"/>
</dbReference>
<dbReference type="NCBIfam" id="TIGR01411">
    <property type="entry name" value="tatAE"/>
    <property type="match status" value="1"/>
</dbReference>
<dbReference type="PANTHER" id="PTHR42982">
    <property type="entry name" value="SEC-INDEPENDENT PROTEIN TRANSLOCASE PROTEIN TATA"/>
    <property type="match status" value="1"/>
</dbReference>
<dbReference type="PANTHER" id="PTHR42982:SF1">
    <property type="entry name" value="SEC-INDEPENDENT PROTEIN TRANSLOCASE PROTEIN TATA"/>
    <property type="match status" value="1"/>
</dbReference>
<dbReference type="Pfam" id="PF02416">
    <property type="entry name" value="TatA_B_E"/>
    <property type="match status" value="1"/>
</dbReference>
<feature type="chain" id="PRO_1000197920" description="Sec-independent protein translocase protein TatA">
    <location>
        <begin position="1"/>
        <end position="71"/>
    </location>
</feature>
<feature type="transmembrane region" description="Helical" evidence="1">
    <location>
        <begin position="1"/>
        <end position="21"/>
    </location>
</feature>
<feature type="region of interest" description="Disordered" evidence="2">
    <location>
        <begin position="43"/>
        <end position="71"/>
    </location>
</feature>
<feature type="compositionally biased region" description="Polar residues" evidence="2">
    <location>
        <begin position="52"/>
        <end position="65"/>
    </location>
</feature>
<keyword id="KW-0997">Cell inner membrane</keyword>
<keyword id="KW-1003">Cell membrane</keyword>
<keyword id="KW-0472">Membrane</keyword>
<keyword id="KW-0653">Protein transport</keyword>
<keyword id="KW-0811">Translocation</keyword>
<keyword id="KW-0812">Transmembrane</keyword>
<keyword id="KW-1133">Transmembrane helix</keyword>
<keyword id="KW-0813">Transport</keyword>
<reference key="1">
    <citation type="journal article" date="2010" name="J. Bacteriol.">
        <title>Whole genome sequences of two Xylella fastidiosa strains (M12 and M23) causing almond leaf scorch disease in California.</title>
        <authorList>
            <person name="Chen J."/>
            <person name="Xie G."/>
            <person name="Han S."/>
            <person name="Chertkov O."/>
            <person name="Sims D."/>
            <person name="Civerolo E.L."/>
        </authorList>
    </citation>
    <scope>NUCLEOTIDE SEQUENCE [LARGE SCALE GENOMIC DNA]</scope>
    <source>
        <strain>M12</strain>
    </source>
</reference>